<sequence>MSPARLRITDRTGDLFAAPANTLLIHACNTVGSWGGGIALAFRNLYPAEFRVYRAHCARSTPNQLVGTALLIAPQRASLNGSGGGGHYIGCLFTSRRFGAARDPPDRILRATGPAMRHLMRLVAEEEERTGVRIGEVRMCRINAGLFAVPWESSKRALEAMELGDGEVPGCAQGGVVEVVAWERA</sequence>
<proteinExistence type="inferred from homology"/>
<gene>
    <name type="primary">POA1</name>
    <name type="ORF">CHGG_08185</name>
</gene>
<keyword id="KW-0378">Hydrolase</keyword>
<keyword id="KW-0904">Protein phosphatase</keyword>
<keyword id="KW-1185">Reference proteome</keyword>
<protein>
    <recommendedName>
        <fullName>ADP-ribose 1''-phosphate phosphatase</fullName>
        <ecNumber>3.1.3.84</ecNumber>
    </recommendedName>
</protein>
<evidence type="ECO:0000250" key="1"/>
<evidence type="ECO:0000305" key="2"/>
<feature type="chain" id="PRO_0000324906" description="ADP-ribose 1''-phosphate phosphatase">
    <location>
        <begin position="1"/>
        <end position="185"/>
    </location>
</feature>
<feature type="domain" description="Macro">
    <location>
        <begin position="1"/>
        <end position="185"/>
    </location>
</feature>
<feature type="binding site" evidence="1">
    <location>
        <begin position="13"/>
        <end position="15"/>
    </location>
    <ligand>
        <name>substrate</name>
    </ligand>
</feature>
<feature type="binding site" evidence="1">
    <location>
        <begin position="27"/>
        <end position="29"/>
    </location>
    <ligand>
        <name>substrate</name>
    </ligand>
</feature>
<feature type="binding site" evidence="1">
    <location>
        <begin position="34"/>
        <end position="39"/>
    </location>
    <ligand>
        <name>substrate</name>
    </ligand>
</feature>
<feature type="binding site" evidence="1">
    <location>
        <begin position="142"/>
        <end position="148"/>
    </location>
    <ligand>
        <name>substrate</name>
    </ligand>
</feature>
<name>POA1_CHAGB</name>
<accession>Q2GV19</accession>
<dbReference type="EC" id="3.1.3.84"/>
<dbReference type="EMBL" id="CH408033">
    <property type="protein sequence ID" value="EAQ86932.1"/>
    <property type="status" value="ALT_INIT"/>
    <property type="molecule type" value="Genomic_DNA"/>
</dbReference>
<dbReference type="RefSeq" id="XP_001225841.1">
    <property type="nucleotide sequence ID" value="XM_001225840.1"/>
</dbReference>
<dbReference type="SMR" id="Q2GV19"/>
<dbReference type="FunCoup" id="Q2GV19">
    <property type="interactions" value="3"/>
</dbReference>
<dbReference type="GeneID" id="4393346"/>
<dbReference type="VEuPathDB" id="FungiDB:CHGG_08185"/>
<dbReference type="eggNOG" id="ENOG502S60W">
    <property type="taxonomic scope" value="Eukaryota"/>
</dbReference>
<dbReference type="HOGENOM" id="CLU_054419_0_0_1"/>
<dbReference type="InParanoid" id="Q2GV19"/>
<dbReference type="OrthoDB" id="2155246at2759"/>
<dbReference type="Proteomes" id="UP000001056">
    <property type="component" value="Unassembled WGS sequence"/>
</dbReference>
<dbReference type="GO" id="GO:0004721">
    <property type="term" value="F:phosphoprotein phosphatase activity"/>
    <property type="evidence" value="ECO:0007669"/>
    <property type="project" value="UniProtKB-KW"/>
</dbReference>
<dbReference type="GO" id="GO:0140291">
    <property type="term" value="P:peptidyl-glutamate ADP-deribosylation"/>
    <property type="evidence" value="ECO:0007669"/>
    <property type="project" value="TreeGrafter"/>
</dbReference>
<dbReference type="CDD" id="cd02901">
    <property type="entry name" value="Macro_Poa1p-like"/>
    <property type="match status" value="1"/>
</dbReference>
<dbReference type="Gene3D" id="3.40.220.10">
    <property type="entry name" value="Leucine Aminopeptidase, subunit E, domain 1"/>
    <property type="match status" value="1"/>
</dbReference>
<dbReference type="InterPro" id="IPR050892">
    <property type="entry name" value="ADP-ribose_metab_enzymes"/>
</dbReference>
<dbReference type="InterPro" id="IPR002589">
    <property type="entry name" value="Macro_dom"/>
</dbReference>
<dbReference type="InterPro" id="IPR043472">
    <property type="entry name" value="Macro_dom-like"/>
</dbReference>
<dbReference type="PANTHER" id="PTHR12521:SF0">
    <property type="entry name" value="ADP-RIBOSE GLYCOHYDROLASE OARD1"/>
    <property type="match status" value="1"/>
</dbReference>
<dbReference type="PANTHER" id="PTHR12521">
    <property type="entry name" value="PROTEIN C6ORF130"/>
    <property type="match status" value="1"/>
</dbReference>
<dbReference type="Pfam" id="PF01661">
    <property type="entry name" value="Macro"/>
    <property type="match status" value="1"/>
</dbReference>
<dbReference type="SMART" id="SM00506">
    <property type="entry name" value="A1pp"/>
    <property type="match status" value="1"/>
</dbReference>
<dbReference type="SUPFAM" id="SSF52949">
    <property type="entry name" value="Macro domain-like"/>
    <property type="match status" value="1"/>
</dbReference>
<comment type="function">
    <text evidence="1">Highly specific phosphatase involved in the metabolism of ADP-ribose 1''-phosphate (Appr1p) which is produced as a consequence of tRNA splicing.</text>
</comment>
<comment type="catalytic activity">
    <reaction>
        <text>ADP-alpha-D-ribose 1''-phosphate + H2O = ADP-D-ribose + phosphate</text>
        <dbReference type="Rhea" id="RHEA:25029"/>
        <dbReference type="ChEBI" id="CHEBI:15377"/>
        <dbReference type="ChEBI" id="CHEBI:43474"/>
        <dbReference type="ChEBI" id="CHEBI:57967"/>
        <dbReference type="ChEBI" id="CHEBI:58753"/>
        <dbReference type="EC" id="3.1.3.84"/>
    </reaction>
</comment>
<comment type="similarity">
    <text evidence="2">Belongs to the POA1 family.</text>
</comment>
<comment type="sequence caution" evidence="2">
    <conflict type="erroneous initiation">
        <sequence resource="EMBL-CDS" id="EAQ86932"/>
    </conflict>
</comment>
<organism>
    <name type="scientific">Chaetomium globosum (strain ATCC 6205 / CBS 148.51 / DSM 1962 / NBRC 6347 / NRRL 1970)</name>
    <name type="common">Soil fungus</name>
    <dbReference type="NCBI Taxonomy" id="306901"/>
    <lineage>
        <taxon>Eukaryota</taxon>
        <taxon>Fungi</taxon>
        <taxon>Dikarya</taxon>
        <taxon>Ascomycota</taxon>
        <taxon>Pezizomycotina</taxon>
        <taxon>Sordariomycetes</taxon>
        <taxon>Sordariomycetidae</taxon>
        <taxon>Sordariales</taxon>
        <taxon>Chaetomiaceae</taxon>
        <taxon>Chaetomium</taxon>
    </lineage>
</organism>
<reference key="1">
    <citation type="journal article" date="2015" name="Genome Announc.">
        <title>Draft genome sequence of the cellulolytic fungus Chaetomium globosum.</title>
        <authorList>
            <person name="Cuomo C.A."/>
            <person name="Untereiner W.A."/>
            <person name="Ma L.-J."/>
            <person name="Grabherr M."/>
            <person name="Birren B.W."/>
        </authorList>
    </citation>
    <scope>NUCLEOTIDE SEQUENCE [LARGE SCALE GENOMIC DNA]</scope>
    <source>
        <strain>ATCC 6205 / CBS 148.51 / DSM 1962 / NBRC 6347 / NRRL 1970</strain>
    </source>
</reference>